<feature type="chain" id="PRO_1000061848" description="Ribosomal RNA large subunit methyltransferase H">
    <location>
        <begin position="1"/>
        <end position="159"/>
    </location>
</feature>
<feature type="binding site" evidence="1">
    <location>
        <position position="76"/>
    </location>
    <ligand>
        <name>S-adenosyl-L-methionine</name>
        <dbReference type="ChEBI" id="CHEBI:59789"/>
    </ligand>
</feature>
<feature type="binding site" evidence="1">
    <location>
        <position position="108"/>
    </location>
    <ligand>
        <name>S-adenosyl-L-methionine</name>
        <dbReference type="ChEBI" id="CHEBI:59789"/>
    </ligand>
</feature>
<feature type="binding site" evidence="1">
    <location>
        <begin position="127"/>
        <end position="132"/>
    </location>
    <ligand>
        <name>S-adenosyl-L-methionine</name>
        <dbReference type="ChEBI" id="CHEBI:59789"/>
    </ligand>
</feature>
<evidence type="ECO:0000255" key="1">
    <source>
        <dbReference type="HAMAP-Rule" id="MF_00658"/>
    </source>
</evidence>
<protein>
    <recommendedName>
        <fullName evidence="1">Ribosomal RNA large subunit methyltransferase H</fullName>
        <ecNumber evidence="1">2.1.1.177</ecNumber>
    </recommendedName>
    <alternativeName>
        <fullName evidence="1">23S rRNA (pseudouridine1915-N3)-methyltransferase</fullName>
    </alternativeName>
    <alternativeName>
        <fullName evidence="1">23S rRNA m3Psi1915 methyltransferase</fullName>
    </alternativeName>
    <alternativeName>
        <fullName evidence="1">rRNA (pseudouridine-N3-)-methyltransferase RlmH</fullName>
    </alternativeName>
</protein>
<reference key="1">
    <citation type="journal article" date="2007" name="J. Bacteriol.">
        <title>Complete genome of acute rheumatic fever-associated serotype M5 Streptococcus pyogenes strain Manfredo.</title>
        <authorList>
            <person name="Holden M.T.G."/>
            <person name="Scott A."/>
            <person name="Cherevach I."/>
            <person name="Chillingworth T."/>
            <person name="Churcher C."/>
            <person name="Cronin A."/>
            <person name="Dowd L."/>
            <person name="Feltwell T."/>
            <person name="Hamlin N."/>
            <person name="Holroyd S."/>
            <person name="Jagels K."/>
            <person name="Moule S."/>
            <person name="Mungall K."/>
            <person name="Quail M.A."/>
            <person name="Price C."/>
            <person name="Rabbinowitsch E."/>
            <person name="Sharp S."/>
            <person name="Skelton J."/>
            <person name="Whitehead S."/>
            <person name="Barrell B.G."/>
            <person name="Kehoe M."/>
            <person name="Parkhill J."/>
        </authorList>
    </citation>
    <scope>NUCLEOTIDE SEQUENCE [LARGE SCALE GENOMIC DNA]</scope>
    <source>
        <strain>Manfredo</strain>
    </source>
</reference>
<comment type="function">
    <text evidence="1">Specifically methylates the pseudouridine at position 1915 (m3Psi1915) in 23S rRNA.</text>
</comment>
<comment type="catalytic activity">
    <reaction evidence="1">
        <text>pseudouridine(1915) in 23S rRNA + S-adenosyl-L-methionine = N(3)-methylpseudouridine(1915) in 23S rRNA + S-adenosyl-L-homocysteine + H(+)</text>
        <dbReference type="Rhea" id="RHEA:42752"/>
        <dbReference type="Rhea" id="RHEA-COMP:10221"/>
        <dbReference type="Rhea" id="RHEA-COMP:10222"/>
        <dbReference type="ChEBI" id="CHEBI:15378"/>
        <dbReference type="ChEBI" id="CHEBI:57856"/>
        <dbReference type="ChEBI" id="CHEBI:59789"/>
        <dbReference type="ChEBI" id="CHEBI:65314"/>
        <dbReference type="ChEBI" id="CHEBI:74486"/>
        <dbReference type="EC" id="2.1.1.177"/>
    </reaction>
</comment>
<comment type="subunit">
    <text evidence="1">Homodimer.</text>
</comment>
<comment type="subcellular location">
    <subcellularLocation>
        <location evidence="1">Cytoplasm</location>
    </subcellularLocation>
</comment>
<comment type="similarity">
    <text evidence="1">Belongs to the RNA methyltransferase RlmH family.</text>
</comment>
<gene>
    <name evidence="1" type="primary">rlmH</name>
    <name type="ordered locus">SpyM51836</name>
</gene>
<accession>A2RH29</accession>
<dbReference type="EC" id="2.1.1.177" evidence="1"/>
<dbReference type="EMBL" id="AM295007">
    <property type="protein sequence ID" value="CAM31161.1"/>
    <property type="molecule type" value="Genomic_DNA"/>
</dbReference>
<dbReference type="RefSeq" id="WP_011889262.1">
    <property type="nucleotide sequence ID" value="NC_009332.1"/>
</dbReference>
<dbReference type="SMR" id="A2RH29"/>
<dbReference type="KEGG" id="spf:SpyM51836"/>
<dbReference type="HOGENOM" id="CLU_100552_0_0_9"/>
<dbReference type="GO" id="GO:0005737">
    <property type="term" value="C:cytoplasm"/>
    <property type="evidence" value="ECO:0007669"/>
    <property type="project" value="UniProtKB-SubCell"/>
</dbReference>
<dbReference type="GO" id="GO:0070038">
    <property type="term" value="F:rRNA (pseudouridine-N3-)-methyltransferase activity"/>
    <property type="evidence" value="ECO:0007669"/>
    <property type="project" value="UniProtKB-UniRule"/>
</dbReference>
<dbReference type="CDD" id="cd18081">
    <property type="entry name" value="RlmH-like"/>
    <property type="match status" value="1"/>
</dbReference>
<dbReference type="Gene3D" id="3.40.1280.10">
    <property type="match status" value="1"/>
</dbReference>
<dbReference type="HAMAP" id="MF_00658">
    <property type="entry name" value="23SrRNA_methyltr_H"/>
    <property type="match status" value="1"/>
</dbReference>
<dbReference type="InterPro" id="IPR029028">
    <property type="entry name" value="Alpha/beta_knot_MTases"/>
</dbReference>
<dbReference type="InterPro" id="IPR003742">
    <property type="entry name" value="RlmH-like"/>
</dbReference>
<dbReference type="InterPro" id="IPR029026">
    <property type="entry name" value="tRNA_m1G_MTases_N"/>
</dbReference>
<dbReference type="NCBIfam" id="NF000985">
    <property type="entry name" value="PRK00103.1-3"/>
    <property type="match status" value="1"/>
</dbReference>
<dbReference type="NCBIfam" id="TIGR00246">
    <property type="entry name" value="tRNA_RlmH_YbeA"/>
    <property type="match status" value="1"/>
</dbReference>
<dbReference type="PANTHER" id="PTHR33603">
    <property type="entry name" value="METHYLTRANSFERASE"/>
    <property type="match status" value="1"/>
</dbReference>
<dbReference type="PANTHER" id="PTHR33603:SF1">
    <property type="entry name" value="RIBOSOMAL RNA LARGE SUBUNIT METHYLTRANSFERASE H"/>
    <property type="match status" value="1"/>
</dbReference>
<dbReference type="Pfam" id="PF02590">
    <property type="entry name" value="SPOUT_MTase"/>
    <property type="match status" value="1"/>
</dbReference>
<dbReference type="PIRSF" id="PIRSF004505">
    <property type="entry name" value="MT_bac"/>
    <property type="match status" value="1"/>
</dbReference>
<dbReference type="SUPFAM" id="SSF75217">
    <property type="entry name" value="alpha/beta knot"/>
    <property type="match status" value="1"/>
</dbReference>
<organism>
    <name type="scientific">Streptococcus pyogenes serotype M5 (strain Manfredo)</name>
    <dbReference type="NCBI Taxonomy" id="160491"/>
    <lineage>
        <taxon>Bacteria</taxon>
        <taxon>Bacillati</taxon>
        <taxon>Bacillota</taxon>
        <taxon>Bacilli</taxon>
        <taxon>Lactobacillales</taxon>
        <taxon>Streptococcaceae</taxon>
        <taxon>Streptococcus</taxon>
    </lineage>
</organism>
<keyword id="KW-0963">Cytoplasm</keyword>
<keyword id="KW-0489">Methyltransferase</keyword>
<keyword id="KW-0698">rRNA processing</keyword>
<keyword id="KW-0949">S-adenosyl-L-methionine</keyword>
<keyword id="KW-0808">Transferase</keyword>
<name>RLMH_STRPG</name>
<proteinExistence type="inferred from homology"/>
<sequence length="159" mass="18185">MKVKLICVGKLKERYLKDGISEYQKRLSRFCQFEMIELTDERTPDKASFADNQLIMSKEAQRIHKKIGERDFVIALAIEGKQFPSETFSELISGVTVKGYSTITFIIGGSLGLDSIIKKRADMLMSFGLLTLPHQLMRLVLTEQIYRAFMITKGSPYHK</sequence>